<reference key="1">
    <citation type="journal article" date="2004" name="Nat. Genet.">
        <title>Comparison of genome degradation in Paratyphi A and Typhi, human-restricted serovars of Salmonella enterica that cause typhoid.</title>
        <authorList>
            <person name="McClelland M."/>
            <person name="Sanderson K.E."/>
            <person name="Clifton S.W."/>
            <person name="Latreille P."/>
            <person name="Porwollik S."/>
            <person name="Sabo A."/>
            <person name="Meyer R."/>
            <person name="Bieri T."/>
            <person name="Ozersky P."/>
            <person name="McLellan M."/>
            <person name="Harkins C.R."/>
            <person name="Wang C."/>
            <person name="Nguyen C."/>
            <person name="Berghoff A."/>
            <person name="Elliott G."/>
            <person name="Kohlberg S."/>
            <person name="Strong C."/>
            <person name="Du F."/>
            <person name="Carter J."/>
            <person name="Kremizki C."/>
            <person name="Layman D."/>
            <person name="Leonard S."/>
            <person name="Sun H."/>
            <person name="Fulton L."/>
            <person name="Nash W."/>
            <person name="Miner T."/>
            <person name="Minx P."/>
            <person name="Delehaunty K."/>
            <person name="Fronick C."/>
            <person name="Magrini V."/>
            <person name="Nhan M."/>
            <person name="Warren W."/>
            <person name="Florea L."/>
            <person name="Spieth J."/>
            <person name="Wilson R.K."/>
        </authorList>
    </citation>
    <scope>NUCLEOTIDE SEQUENCE [LARGE SCALE GENOMIC DNA]</scope>
    <source>
        <strain>ATCC 9150 / SARB42</strain>
    </source>
</reference>
<gene>
    <name evidence="1" type="primary">citD1</name>
    <name type="synonym">citD</name>
    <name type="ordered locus">SPA2111</name>
</gene>
<sequence>MKINQLAVASTLESGDVMIRIAPLDTQDIDLQINSSIEKQFGEAIRATILEVLSRYDVRGVQLNVDDKGALDCILRARLETLLARASGIAALPWEDRQ</sequence>
<proteinExistence type="inferred from homology"/>
<accession>Q5PMB1</accession>
<name>CITD1_SALPA</name>
<organism>
    <name type="scientific">Salmonella paratyphi A (strain ATCC 9150 / SARB42)</name>
    <dbReference type="NCBI Taxonomy" id="295319"/>
    <lineage>
        <taxon>Bacteria</taxon>
        <taxon>Pseudomonadati</taxon>
        <taxon>Pseudomonadota</taxon>
        <taxon>Gammaproteobacteria</taxon>
        <taxon>Enterobacterales</taxon>
        <taxon>Enterobacteriaceae</taxon>
        <taxon>Salmonella</taxon>
    </lineage>
</organism>
<evidence type="ECO:0000255" key="1">
    <source>
        <dbReference type="HAMAP-Rule" id="MF_00805"/>
    </source>
</evidence>
<keyword id="KW-0963">Cytoplasm</keyword>
<keyword id="KW-0597">Phosphoprotein</keyword>
<feature type="chain" id="PRO_0000214705" description="Citrate lyase acyl carrier protein 1">
    <location>
        <begin position="1"/>
        <end position="98"/>
    </location>
</feature>
<feature type="modified residue" description="O-(phosphoribosyl dephospho-coenzyme A)serine" evidence="1">
    <location>
        <position position="14"/>
    </location>
</feature>
<dbReference type="EMBL" id="CP000026">
    <property type="protein sequence ID" value="AAV78004.1"/>
    <property type="molecule type" value="Genomic_DNA"/>
</dbReference>
<dbReference type="RefSeq" id="WP_000700687.1">
    <property type="nucleotide sequence ID" value="NC_006511.1"/>
</dbReference>
<dbReference type="SMR" id="Q5PMB1"/>
<dbReference type="KEGG" id="spt:SPA2111"/>
<dbReference type="HOGENOM" id="CLU_158489_0_0_6"/>
<dbReference type="Proteomes" id="UP000008185">
    <property type="component" value="Chromosome"/>
</dbReference>
<dbReference type="GO" id="GO:0005737">
    <property type="term" value="C:cytoplasm"/>
    <property type="evidence" value="ECO:0007669"/>
    <property type="project" value="UniProtKB-SubCell"/>
</dbReference>
<dbReference type="HAMAP" id="MF_00805">
    <property type="entry name" value="CitD"/>
    <property type="match status" value="1"/>
</dbReference>
<dbReference type="InterPro" id="IPR006495">
    <property type="entry name" value="CitD"/>
</dbReference>
<dbReference type="InterPro" id="IPR023439">
    <property type="entry name" value="Mal_deCO2ase/Cit_lyase_ACP"/>
</dbReference>
<dbReference type="NCBIfam" id="TIGR01608">
    <property type="entry name" value="citD"/>
    <property type="match status" value="1"/>
</dbReference>
<dbReference type="NCBIfam" id="NF009726">
    <property type="entry name" value="PRK13253.1"/>
    <property type="match status" value="1"/>
</dbReference>
<dbReference type="Pfam" id="PF06857">
    <property type="entry name" value="ACP"/>
    <property type="match status" value="1"/>
</dbReference>
<dbReference type="PIRSF" id="PIRSF002736">
    <property type="entry name" value="Citrt_lyas_gamma"/>
    <property type="match status" value="1"/>
</dbReference>
<comment type="function">
    <text evidence="1">Covalent carrier of the coenzyme of citrate lyase.</text>
</comment>
<comment type="subunit">
    <text evidence="1">Oligomer with a subunit composition of (alpha,beta,gamma)6.</text>
</comment>
<comment type="subcellular location">
    <subcellularLocation>
        <location evidence="1">Cytoplasm</location>
    </subcellularLocation>
</comment>
<comment type="similarity">
    <text evidence="1">Belongs to the CitD family.</text>
</comment>
<protein>
    <recommendedName>
        <fullName evidence="1">Citrate lyase acyl carrier protein 1</fullName>
    </recommendedName>
    <alternativeName>
        <fullName evidence="1">Citrate lyase gamma chain 1</fullName>
    </alternativeName>
</protein>